<evidence type="ECO:0000250" key="1"/>
<evidence type="ECO:0000250" key="2">
    <source>
        <dbReference type="UniProtKB" id="P25024"/>
    </source>
</evidence>
<evidence type="ECO:0000255" key="3"/>
<evidence type="ECO:0000255" key="4">
    <source>
        <dbReference type="PROSITE-ProRule" id="PRU00521"/>
    </source>
</evidence>
<accession>Q2YEG0</accession>
<comment type="function">
    <text evidence="2">Receptor to interleukin-8, which is a powerful neutrophils chemotactic factor. Binding of IL-8 to the receptor causes activation of neutrophils. This response is mediated via a G-protein that activates a phosphatidylinositol-calcium second messenger system.</text>
</comment>
<comment type="subunit">
    <text evidence="2">Interacts with IL8. Interacts with GNAI2.</text>
</comment>
<comment type="subcellular location">
    <subcellularLocation>
        <location evidence="1">Cell membrane</location>
        <topology evidence="1">Multi-pass membrane protein</topology>
    </subcellularLocation>
</comment>
<comment type="similarity">
    <text evidence="4">Belongs to the G-protein coupled receptor 1 family.</text>
</comment>
<protein>
    <recommendedName>
        <fullName>C-X-C chemokine receptor type 1</fullName>
        <shortName>CXC-R1</shortName>
        <shortName>CXCR-1</shortName>
    </recommendedName>
    <alternativeName>
        <fullName>High affinity interleukin-8 receptor A</fullName>
        <shortName>IL-8R A</shortName>
    </alternativeName>
    <alternativeName>
        <fullName>IL-8 receptor type 1</fullName>
    </alternativeName>
    <cdAntigenName>CD181</cdAntigenName>
</protein>
<gene>
    <name type="primary">CXCR1</name>
    <name type="synonym">IL8RA</name>
</gene>
<sequence>MSNATDPQMGDDDYDLNFTGMPPTDEDYSPCRLETQSLNKYVVIVTYALVFLLSLLGNSLVMLVILYRRVGRSVTDVYLLNLAMADLLFALTLPIWAASKVNGWIFGTFLCKVVSLLKEVNFYSGILLLACISVDRYLAIVHATRTLIQKRHSVKFVCLSCWGLSVILSLPFFLFRQAYHPNNSTPVCYEVLGNDTAKWRMVLRILPHTFGFTLPLLIMLFCYGFTLHTLFKAHIGQKHRAMRVIFAVVLIFLLCWLPYNLVLLADTLMRTHLIKESCERRNDIGRALDATEILGFLHSCLNPIIYAFIGQNFRHGFLKILATHGLVSKEFLARHHVTSYTSSSVNVSSNL</sequence>
<keyword id="KW-1003">Cell membrane</keyword>
<keyword id="KW-0145">Chemotaxis</keyword>
<keyword id="KW-1015">Disulfide bond</keyword>
<keyword id="KW-0297">G-protein coupled receptor</keyword>
<keyword id="KW-0325">Glycoprotein</keyword>
<keyword id="KW-0472">Membrane</keyword>
<keyword id="KW-0675">Receptor</keyword>
<keyword id="KW-1185">Reference proteome</keyword>
<keyword id="KW-0807">Transducer</keyword>
<keyword id="KW-0812">Transmembrane</keyword>
<keyword id="KW-1133">Transmembrane helix</keyword>
<proteinExistence type="inferred from homology"/>
<feature type="chain" id="PRO_0000237619" description="C-X-C chemokine receptor type 1">
    <location>
        <begin position="1"/>
        <end position="351"/>
    </location>
</feature>
<feature type="topological domain" description="Extracellular" evidence="3">
    <location>
        <begin position="1"/>
        <end position="46"/>
    </location>
</feature>
<feature type="transmembrane region" description="Helical; Name=1" evidence="3">
    <location>
        <begin position="47"/>
        <end position="67"/>
    </location>
</feature>
<feature type="topological domain" description="Cytoplasmic" evidence="3">
    <location>
        <begin position="68"/>
        <end position="76"/>
    </location>
</feature>
<feature type="transmembrane region" description="Helical; Name=2" evidence="3">
    <location>
        <begin position="77"/>
        <end position="97"/>
    </location>
</feature>
<feature type="topological domain" description="Extracellular" evidence="3">
    <location>
        <begin position="98"/>
        <end position="112"/>
    </location>
</feature>
<feature type="transmembrane region" description="Helical; Name=3" evidence="3">
    <location>
        <begin position="113"/>
        <end position="133"/>
    </location>
</feature>
<feature type="topological domain" description="Cytoplasmic" evidence="3">
    <location>
        <begin position="134"/>
        <end position="154"/>
    </location>
</feature>
<feature type="transmembrane region" description="Helical; Name=4" evidence="3">
    <location>
        <begin position="155"/>
        <end position="175"/>
    </location>
</feature>
<feature type="topological domain" description="Extracellular" evidence="3">
    <location>
        <begin position="176"/>
        <end position="204"/>
    </location>
</feature>
<feature type="transmembrane region" description="Helical; Name=5" evidence="3">
    <location>
        <begin position="205"/>
        <end position="225"/>
    </location>
</feature>
<feature type="topological domain" description="Cytoplasmic" evidence="3">
    <location>
        <begin position="226"/>
        <end position="243"/>
    </location>
</feature>
<feature type="transmembrane region" description="Helical; Name=6" evidence="3">
    <location>
        <begin position="244"/>
        <end position="264"/>
    </location>
</feature>
<feature type="topological domain" description="Extracellular" evidence="3">
    <location>
        <begin position="265"/>
        <end position="289"/>
    </location>
</feature>
<feature type="transmembrane region" description="Helical; Name=7" evidence="3">
    <location>
        <begin position="290"/>
        <end position="310"/>
    </location>
</feature>
<feature type="topological domain" description="Cytoplasmic" evidence="3">
    <location>
        <begin position="311"/>
        <end position="351"/>
    </location>
</feature>
<feature type="glycosylation site" description="N-linked (GlcNAc...) asparagine" evidence="3">
    <location>
        <position position="3"/>
    </location>
</feature>
<feature type="glycosylation site" description="N-linked (GlcNAc...) asparagine" evidence="3">
    <location>
        <position position="17"/>
    </location>
</feature>
<feature type="glycosylation site" description="N-linked (GlcNAc...) asparagine" evidence="3">
    <location>
        <position position="182"/>
    </location>
</feature>
<feature type="glycosylation site" description="N-linked (GlcNAc...) asparagine" evidence="3">
    <location>
        <position position="194"/>
    </location>
</feature>
<feature type="disulfide bond" evidence="4">
    <location>
        <begin position="111"/>
        <end position="188"/>
    </location>
</feature>
<name>CXCR1_MACMU</name>
<dbReference type="EMBL" id="AY916770">
    <property type="protein sequence ID" value="AAY21520.1"/>
    <property type="molecule type" value="Genomic_DNA"/>
</dbReference>
<dbReference type="RefSeq" id="NP_001035510.1">
    <property type="nucleotide sequence ID" value="NM_001040420.1"/>
</dbReference>
<dbReference type="RefSeq" id="XP_014966445.1">
    <property type="nucleotide sequence ID" value="XM_015110959.1"/>
</dbReference>
<dbReference type="RefSeq" id="XP_014966446.1">
    <property type="nucleotide sequence ID" value="XM_015110960.1"/>
</dbReference>
<dbReference type="RefSeq" id="XP_014966447.1">
    <property type="nucleotide sequence ID" value="XM_015110961.1"/>
</dbReference>
<dbReference type="RefSeq" id="XP_014966448.1">
    <property type="nucleotide sequence ID" value="XM_015110962.1"/>
</dbReference>
<dbReference type="RefSeq" id="XP_028686185.1">
    <property type="nucleotide sequence ID" value="XM_028830352.1"/>
</dbReference>
<dbReference type="RefSeq" id="XP_028686186.1">
    <property type="nucleotide sequence ID" value="XM_028830353.1"/>
</dbReference>
<dbReference type="SMR" id="Q2YEG0"/>
<dbReference type="FunCoup" id="Q2YEG0">
    <property type="interactions" value="1000"/>
</dbReference>
<dbReference type="STRING" id="9544.ENSMMUP00000065767"/>
<dbReference type="GlyCosmos" id="Q2YEG0">
    <property type="glycosylation" value="4 sites, No reported glycans"/>
</dbReference>
<dbReference type="PaxDb" id="9544-ENSMMUP00000025429"/>
<dbReference type="Ensembl" id="ENSMMUT00000027182.4">
    <property type="protein sequence ID" value="ENSMMUP00000025429.2"/>
    <property type="gene ID" value="ENSMMUG00000019351.4"/>
</dbReference>
<dbReference type="Ensembl" id="ENSMMUT00000098782.1">
    <property type="protein sequence ID" value="ENSMMUP00000065767.1"/>
    <property type="gene ID" value="ENSMMUG00000019351.4"/>
</dbReference>
<dbReference type="GeneID" id="692074"/>
<dbReference type="KEGG" id="mcc:692074"/>
<dbReference type="CTD" id="3577"/>
<dbReference type="VEuPathDB" id="HostDB:ENSMMUG00000019351"/>
<dbReference type="VGNC" id="VGNC:71616">
    <property type="gene designation" value="CXCR1"/>
</dbReference>
<dbReference type="eggNOG" id="KOG3656">
    <property type="taxonomic scope" value="Eukaryota"/>
</dbReference>
<dbReference type="GeneTree" id="ENSGT01050000244848"/>
<dbReference type="HOGENOM" id="CLU_009579_8_3_1"/>
<dbReference type="InParanoid" id="Q2YEG0"/>
<dbReference type="OMA" id="SPVCYEV"/>
<dbReference type="OrthoDB" id="9946013at2759"/>
<dbReference type="TreeFam" id="TF330966"/>
<dbReference type="Proteomes" id="UP000006718">
    <property type="component" value="Chromosome 12"/>
</dbReference>
<dbReference type="Bgee" id="ENSMMUG00000019351">
    <property type="expression patterns" value="Expressed in spermatid and 5 other cell types or tissues"/>
</dbReference>
<dbReference type="ExpressionAtlas" id="Q2YEG0">
    <property type="expression patterns" value="baseline"/>
</dbReference>
<dbReference type="GO" id="GO:0009897">
    <property type="term" value="C:external side of plasma membrane"/>
    <property type="evidence" value="ECO:0000318"/>
    <property type="project" value="GO_Central"/>
</dbReference>
<dbReference type="GO" id="GO:0019957">
    <property type="term" value="F:C-C chemokine binding"/>
    <property type="evidence" value="ECO:0000318"/>
    <property type="project" value="GO_Central"/>
</dbReference>
<dbReference type="GO" id="GO:0016493">
    <property type="term" value="F:C-C chemokine receptor activity"/>
    <property type="evidence" value="ECO:0000318"/>
    <property type="project" value="GO_Central"/>
</dbReference>
<dbReference type="GO" id="GO:0019959">
    <property type="term" value="F:interleukin-8 binding"/>
    <property type="evidence" value="ECO:0007669"/>
    <property type="project" value="Ensembl"/>
</dbReference>
<dbReference type="GO" id="GO:0004918">
    <property type="term" value="F:interleukin-8 receptor activity"/>
    <property type="evidence" value="ECO:0007669"/>
    <property type="project" value="Ensembl"/>
</dbReference>
<dbReference type="GO" id="GO:0019722">
    <property type="term" value="P:calcium-mediated signaling"/>
    <property type="evidence" value="ECO:0000318"/>
    <property type="project" value="GO_Central"/>
</dbReference>
<dbReference type="GO" id="GO:0006955">
    <property type="term" value="P:immune response"/>
    <property type="evidence" value="ECO:0000318"/>
    <property type="project" value="GO_Central"/>
</dbReference>
<dbReference type="GO" id="GO:0030593">
    <property type="term" value="P:neutrophil chemotaxis"/>
    <property type="evidence" value="ECO:0000318"/>
    <property type="project" value="GO_Central"/>
</dbReference>
<dbReference type="GO" id="GO:0007204">
    <property type="term" value="P:positive regulation of cytosolic calcium ion concentration"/>
    <property type="evidence" value="ECO:0000318"/>
    <property type="project" value="GO_Central"/>
</dbReference>
<dbReference type="GO" id="GO:0031623">
    <property type="term" value="P:receptor internalization"/>
    <property type="evidence" value="ECO:0007669"/>
    <property type="project" value="Ensembl"/>
</dbReference>
<dbReference type="CDD" id="cd15178">
    <property type="entry name" value="7tmA_CXCR1_2"/>
    <property type="match status" value="1"/>
</dbReference>
<dbReference type="FunFam" id="1.20.1070.10:FF:000157">
    <property type="entry name" value="C-X-C chemokine receptor type 2"/>
    <property type="match status" value="1"/>
</dbReference>
<dbReference type="Gene3D" id="1.20.1070.10">
    <property type="entry name" value="Rhodopsin 7-helix transmembrane proteins"/>
    <property type="match status" value="1"/>
</dbReference>
<dbReference type="InterPro" id="IPR050119">
    <property type="entry name" value="CCR1-9-like"/>
</dbReference>
<dbReference type="InterPro" id="IPR001355">
    <property type="entry name" value="Chemokine_CXCR1"/>
</dbReference>
<dbReference type="InterPro" id="IPR000174">
    <property type="entry name" value="Chemokine_CXCR_1/2"/>
</dbReference>
<dbReference type="InterPro" id="IPR000276">
    <property type="entry name" value="GPCR_Rhodpsn"/>
</dbReference>
<dbReference type="InterPro" id="IPR017452">
    <property type="entry name" value="GPCR_Rhodpsn_7TM"/>
</dbReference>
<dbReference type="PANTHER" id="PTHR10489:SF916">
    <property type="entry name" value="C-X-C CHEMOKINE RECEPTOR TYPE 1"/>
    <property type="match status" value="1"/>
</dbReference>
<dbReference type="PANTHER" id="PTHR10489">
    <property type="entry name" value="CELL ADHESION MOLECULE"/>
    <property type="match status" value="1"/>
</dbReference>
<dbReference type="Pfam" id="PF00001">
    <property type="entry name" value="7tm_1"/>
    <property type="match status" value="1"/>
</dbReference>
<dbReference type="PRINTS" id="PR00237">
    <property type="entry name" value="GPCRRHODOPSN"/>
</dbReference>
<dbReference type="PRINTS" id="PR00427">
    <property type="entry name" value="INTRLEUKIN8R"/>
</dbReference>
<dbReference type="PRINTS" id="PR00572">
    <property type="entry name" value="INTRLEUKN8AR"/>
</dbReference>
<dbReference type="SUPFAM" id="SSF81321">
    <property type="entry name" value="Family A G protein-coupled receptor-like"/>
    <property type="match status" value="1"/>
</dbReference>
<dbReference type="PROSITE" id="PS00237">
    <property type="entry name" value="G_PROTEIN_RECEP_F1_1"/>
    <property type="match status" value="1"/>
</dbReference>
<dbReference type="PROSITE" id="PS50262">
    <property type="entry name" value="G_PROTEIN_RECEP_F1_2"/>
    <property type="match status" value="1"/>
</dbReference>
<organism>
    <name type="scientific">Macaca mulatta</name>
    <name type="common">Rhesus macaque</name>
    <dbReference type="NCBI Taxonomy" id="9544"/>
    <lineage>
        <taxon>Eukaryota</taxon>
        <taxon>Metazoa</taxon>
        <taxon>Chordata</taxon>
        <taxon>Craniata</taxon>
        <taxon>Vertebrata</taxon>
        <taxon>Euteleostomi</taxon>
        <taxon>Mammalia</taxon>
        <taxon>Eutheria</taxon>
        <taxon>Euarchontoglires</taxon>
        <taxon>Primates</taxon>
        <taxon>Haplorrhini</taxon>
        <taxon>Catarrhini</taxon>
        <taxon>Cercopithecidae</taxon>
        <taxon>Cercopithecinae</taxon>
        <taxon>Macaca</taxon>
    </lineage>
</organism>
<reference key="1">
    <citation type="journal article" date="2005" name="J. Mol. Evol.">
        <title>Molecular evolution of CXCR1, a G protein-coupled receptor involved in signal transduction of neutrophils.</title>
        <authorList>
            <person name="Liu Y."/>
            <person name="Yang S."/>
            <person name="Lin A.A."/>
            <person name="Cavalli-Sforza L.L."/>
            <person name="Su B."/>
        </authorList>
    </citation>
    <scope>NUCLEOTIDE SEQUENCE [GENOMIC DNA]</scope>
</reference>